<reference key="1">
    <citation type="journal article" date="2011" name="PLoS Genet.">
        <title>Whole-genome comparison reveals novel genetic elements that characterize the genome of industrial strains of Saccharomyces cerevisiae.</title>
        <authorList>
            <person name="Borneman A.R."/>
            <person name="Desany B.A."/>
            <person name="Riches D."/>
            <person name="Affourtit J.P."/>
            <person name="Forgan A.H."/>
            <person name="Pretorius I.S."/>
            <person name="Egholm M."/>
            <person name="Chambers P.J."/>
        </authorList>
    </citation>
    <scope>NUCLEOTIDE SEQUENCE [LARGE SCALE GENOMIC DNA]</scope>
    <source>
        <strain>Lalvin QA23</strain>
    </source>
</reference>
<keyword id="KW-0175">Coiled coil</keyword>
<keyword id="KW-0963">Cytoplasm</keyword>
<keyword id="KW-0206">Cytoskeleton</keyword>
<keyword id="KW-0597">Phosphoprotein</keyword>
<comment type="function">
    <text evidence="1">Component of the spindle pole body (SPB) required for insertion of the nascent SPB into the nuclear envelope and for the proper execution of spindle pole body (SPB) duplication. Connects the central plaque of the SPB with the half-bridge. Required for proper localization of CDC5 at the SPB and for proper M-phase progression (By similarity).</text>
</comment>
<comment type="subunit">
    <text evidence="1">Homodimer. Interacts with KAR1, MPS2 and SPC29.</text>
</comment>
<comment type="subcellular location">
    <subcellularLocation>
        <location evidence="1">Cytoplasm</location>
        <location evidence="1">Cytoskeleton</location>
        <location evidence="1">Microtubule organizing center</location>
        <location evidence="1">Spindle pole body</location>
    </subcellularLocation>
    <text evidence="1">Associates with the periphary of the central plaque.</text>
</comment>
<comment type="similarity">
    <text evidence="5">Belongs to the BBP1 family.</text>
</comment>
<sequence length="419" mass="49446">MNQEDNTGGGGIFGLFKWTKDALFGTDISPSMKYKDQEERRDRSRYAQDDTNFSMKFGNDSNRRSTNLSRSNSWSGLDSTLHRKYELLPEYNENGFNSIVNGDHHSKERIRSLRSPAPIVPREPLRNEPTDTFGHRLHTKRRTINELSNSQIPFIPPQEDDPLLSKLFNKDGVNEVRRSPYKLSVKDIPGKFPSPLTKRDEIDNYYVRDEDACHKNREYKKAYFDLFAQMDLNSRDLEDLCEDVREQREQFHRNEQTYKQAYEEMRAELVNELKKSKTLFENYYSLGQKYKSLKKVLDQTISHEAELATSRERLYQEEDLKNFEIQTLKQRLSDLELKYTNLQIEKDMQRDNYESEIHDLLLQLSLRNNERKDTSAGSNIFSTGQYDRTPFHNGNNSYDSNSHSWDTDYLKNIDGFIER</sequence>
<accession>E7KV71</accession>
<feature type="chain" id="PRO_0000409181" description="Spindle pole component BBP1">
    <location>
        <begin position="1"/>
        <end position="419"/>
    </location>
</feature>
<feature type="region of interest" description="Disordered" evidence="4">
    <location>
        <begin position="34"/>
        <end position="76"/>
    </location>
</feature>
<feature type="coiled-coil region" evidence="3">
    <location>
        <begin position="229"/>
        <end position="355"/>
    </location>
</feature>
<feature type="compositionally biased region" description="Basic and acidic residues" evidence="4">
    <location>
        <begin position="34"/>
        <end position="48"/>
    </location>
</feature>
<feature type="compositionally biased region" description="Low complexity" evidence="4">
    <location>
        <begin position="64"/>
        <end position="75"/>
    </location>
</feature>
<feature type="modified residue" description="Phosphoserine" evidence="2">
    <location>
        <position position="29"/>
    </location>
</feature>
<feature type="modified residue" description="Phosphoserine" evidence="2">
    <location>
        <position position="73"/>
    </location>
</feature>
<feature type="modified residue" description="Phosphoserine" evidence="2">
    <location>
        <position position="115"/>
    </location>
</feature>
<name>BBP1_YEASL</name>
<evidence type="ECO:0000250" key="1"/>
<evidence type="ECO:0000250" key="2">
    <source>
        <dbReference type="UniProtKB" id="Q12365"/>
    </source>
</evidence>
<evidence type="ECO:0000255" key="3"/>
<evidence type="ECO:0000256" key="4">
    <source>
        <dbReference type="SAM" id="MobiDB-lite"/>
    </source>
</evidence>
<evidence type="ECO:0000305" key="5"/>
<organism>
    <name type="scientific">Saccharomyces cerevisiae (strain Lalvin QA23)</name>
    <name type="common">Baker's yeast</name>
    <dbReference type="NCBI Taxonomy" id="764098"/>
    <lineage>
        <taxon>Eukaryota</taxon>
        <taxon>Fungi</taxon>
        <taxon>Dikarya</taxon>
        <taxon>Ascomycota</taxon>
        <taxon>Saccharomycotina</taxon>
        <taxon>Saccharomycetes</taxon>
        <taxon>Saccharomycetales</taxon>
        <taxon>Saccharomycetaceae</taxon>
        <taxon>Saccharomyces</taxon>
    </lineage>
</organism>
<gene>
    <name type="primary">BBP1</name>
    <name type="ORF">QA23_4725</name>
</gene>
<proteinExistence type="inferred from homology"/>
<dbReference type="EMBL" id="ADVV01000082">
    <property type="protein sequence ID" value="EGA80363.1"/>
    <property type="molecule type" value="Genomic_DNA"/>
</dbReference>
<dbReference type="SMR" id="E7KV71"/>
<dbReference type="HOGENOM" id="CLU_711875_0_0_1"/>
<dbReference type="GO" id="GO:0005737">
    <property type="term" value="C:cytoplasm"/>
    <property type="evidence" value="ECO:0007669"/>
    <property type="project" value="UniProtKB-KW"/>
</dbReference>
<dbReference type="GO" id="GO:0005816">
    <property type="term" value="C:spindle pole body"/>
    <property type="evidence" value="ECO:0007669"/>
    <property type="project" value="UniProtKB-SubCell"/>
</dbReference>
<dbReference type="InterPro" id="IPR029330">
    <property type="entry name" value="Bbp1_C"/>
</dbReference>
<dbReference type="InterPro" id="IPR029328">
    <property type="entry name" value="Bbp1_N"/>
</dbReference>
<dbReference type="Pfam" id="PF15272">
    <property type="entry name" value="BBP1_C"/>
    <property type="match status" value="1"/>
</dbReference>
<dbReference type="Pfam" id="PF15271">
    <property type="entry name" value="BBP1_N"/>
    <property type="match status" value="1"/>
</dbReference>
<protein>
    <recommendedName>
        <fullName>Spindle pole component BBP1</fullName>
    </recommendedName>
    <alternativeName>
        <fullName>BFR1-binding protein 1</fullName>
    </alternativeName>
</protein>